<comment type="subcellular location">
    <subcellularLocation>
        <location evidence="2">Membrane</location>
        <topology evidence="2">Multi-pass membrane protein</topology>
    </subcellularLocation>
</comment>
<comment type="miscellaneous">
    <text evidence="2">Partially overlaps IMP1.</text>
</comment>
<comment type="caution">
    <text evidence="3">Product of a dubious gene prediction unlikely to encode a functional protein. Because of that it is not part of the S.cerevisiae S288c complete/reference proteome set.</text>
</comment>
<comment type="sequence caution" evidence="2">
    <conflict type="frameshift">
        <sequence resource="EMBL-CDS" id="AAB19703"/>
    </conflict>
</comment>
<proteinExistence type="uncertain"/>
<reference key="1">
    <citation type="journal article" date="1991" name="Mol. Gen. Genet.">
        <title>Mitochondrial inner membrane protease 1 of Saccharomyces cerevisiae shows sequence similarity to the Escherichia coli leader peptidase.</title>
        <authorList>
            <person name="Behrens M."/>
            <person name="Michaelis G."/>
            <person name="Pratje E."/>
        </authorList>
    </citation>
    <scope>NUCLEOTIDE SEQUENCE [GENOMIC DNA]</scope>
</reference>
<reference key="2">
    <citation type="journal article" date="1997" name="Nature">
        <title>The nucleotide sequence of Saccharomyces cerevisiae chromosome XIII.</title>
        <authorList>
            <person name="Bowman S."/>
            <person name="Churcher C.M."/>
            <person name="Badcock K."/>
            <person name="Brown D."/>
            <person name="Chillingworth T."/>
            <person name="Connor R."/>
            <person name="Dedman K."/>
            <person name="Devlin K."/>
            <person name="Gentles S."/>
            <person name="Hamlin N."/>
            <person name="Hunt S."/>
            <person name="Jagels K."/>
            <person name="Lye G."/>
            <person name="Moule S."/>
            <person name="Odell C."/>
            <person name="Pearson D."/>
            <person name="Rajandream M.A."/>
            <person name="Rice P."/>
            <person name="Skelton J."/>
            <person name="Walsh S.V."/>
            <person name="Whitehead S."/>
            <person name="Barrell B.G."/>
        </authorList>
    </citation>
    <scope>NUCLEOTIDE SEQUENCE [LARGE SCALE GENOMIC DNA]</scope>
    <source>
        <strain>ATCC 204508 / S288c</strain>
    </source>
</reference>
<reference key="3">
    <citation type="journal article" date="2014" name="G3 (Bethesda)">
        <title>The reference genome sequence of Saccharomyces cerevisiae: Then and now.</title>
        <authorList>
            <person name="Engel S.R."/>
            <person name="Dietrich F.S."/>
            <person name="Fisk D.G."/>
            <person name="Binkley G."/>
            <person name="Balakrishnan R."/>
            <person name="Costanzo M.C."/>
            <person name="Dwight S.S."/>
            <person name="Hitz B.C."/>
            <person name="Karra K."/>
            <person name="Nash R.S."/>
            <person name="Weng S."/>
            <person name="Wong E.D."/>
            <person name="Lloyd P."/>
            <person name="Skrzypek M.S."/>
            <person name="Miyasato S.R."/>
            <person name="Simison M."/>
            <person name="Cherry J.M."/>
        </authorList>
    </citation>
    <scope>GENOME REANNOTATION</scope>
    <source>
        <strain>ATCC 204508 / S288c</strain>
    </source>
</reference>
<reference key="4">
    <citation type="journal article" date="2007" name="Genome Res.">
        <title>Approaching a complete repository of sequence-verified protein-encoding clones for Saccharomyces cerevisiae.</title>
        <authorList>
            <person name="Hu Y."/>
            <person name="Rolfs A."/>
            <person name="Bhullar B."/>
            <person name="Murthy T.V.S."/>
            <person name="Zhu C."/>
            <person name="Berger M.F."/>
            <person name="Camargo A.A."/>
            <person name="Kelley F."/>
            <person name="McCarron S."/>
            <person name="Jepson D."/>
            <person name="Richardson A."/>
            <person name="Raphael J."/>
            <person name="Moreira D."/>
            <person name="Taycher E."/>
            <person name="Zuo D."/>
            <person name="Mohr S."/>
            <person name="Kane M.F."/>
            <person name="Williamson J."/>
            <person name="Simpson A.J.G."/>
            <person name="Bulyk M.L."/>
            <person name="Harlow E."/>
            <person name="Marsischky G."/>
            <person name="Kolodner R.D."/>
            <person name="LaBaer J."/>
        </authorList>
    </citation>
    <scope>NUCLEOTIDE SEQUENCE [GENOMIC DNA]</scope>
    <source>
        <strain>ATCC 204508 / S288c</strain>
    </source>
</reference>
<organism>
    <name type="scientific">Saccharomyces cerevisiae (strain ATCC 204508 / S288c)</name>
    <name type="common">Baker's yeast</name>
    <dbReference type="NCBI Taxonomy" id="559292"/>
    <lineage>
        <taxon>Eukaryota</taxon>
        <taxon>Fungi</taxon>
        <taxon>Dikarya</taxon>
        <taxon>Ascomycota</taxon>
        <taxon>Saccharomycotina</taxon>
        <taxon>Saccharomycetes</taxon>
        <taxon>Saccharomycetales</taxon>
        <taxon>Saccharomycetaceae</taxon>
        <taxon>Saccharomyces</taxon>
    </lineage>
</organism>
<gene>
    <name type="primary">YIM2</name>
    <name type="ordered locus">YMR151W</name>
    <name type="ORF">YM9375.21</name>
</gene>
<feature type="chain" id="PRO_0000203309" description="Putative uncharacterized protein YIM2">
    <location>
        <begin position="1"/>
        <end position="145"/>
    </location>
</feature>
<feature type="transmembrane region" description="Helical" evidence="1">
    <location>
        <begin position="20"/>
        <end position="40"/>
    </location>
</feature>
<feature type="transmembrane region" description="Helical" evidence="1">
    <location>
        <begin position="116"/>
        <end position="136"/>
    </location>
</feature>
<feature type="sequence conflict" description="In Ref. 1; AAB19703." evidence="2" ref="1">
    <original>F</original>
    <variation>L</variation>
    <location>
        <position position="39"/>
    </location>
</feature>
<feature type="sequence conflict" description="In Ref. 1; AAB19703." evidence="2" ref="1">
    <original>K</original>
    <variation>E</variation>
    <location>
        <position position="83"/>
    </location>
</feature>
<feature type="sequence conflict" description="In Ref. 1; AAB19703." evidence="2" ref="1">
    <original>Y</original>
    <variation>H</variation>
    <location>
        <position position="115"/>
    </location>
</feature>
<feature type="sequence conflict" description="In Ref. 1; AAB19703." evidence="2" ref="1">
    <original>C</original>
    <variation>F</variation>
    <location>
        <position position="132"/>
    </location>
</feature>
<feature type="sequence conflict" description="In Ref. 1; AAB19703." evidence="2" ref="1">
    <original>F</original>
    <variation>S</variation>
    <location>
        <position position="143"/>
    </location>
</feature>
<sequence>MGSVPTVIPGIVHCWMIHCLIGPFLFAIIYWSIFIEGMFFPQKYLDCQSVINLLCGSNQQKRIFKEKLRIYQVHIQEKIGCSKFNTLLLIYQLGSRHKINRQINDLLCNLCSKNYMIMLLYAEIIIYSSFSCVLSATIFLRGFLL</sequence>
<protein>
    <recommendedName>
        <fullName>Putative uncharacterized protein YIM2</fullName>
    </recommendedName>
    <alternativeName>
        <fullName>RF435</fullName>
    </alternativeName>
</protein>
<accession>P28626</accession>
<evidence type="ECO:0000255" key="1"/>
<evidence type="ECO:0000305" key="2"/>
<evidence type="ECO:0000305" key="3">
    <source>
    </source>
</evidence>
<keyword id="KW-0472">Membrane</keyword>
<keyword id="KW-0812">Transmembrane</keyword>
<keyword id="KW-1133">Transmembrane helix</keyword>
<name>YIM2_YEAST</name>
<dbReference type="EMBL" id="S55518">
    <property type="protein sequence ID" value="AAB19703.1"/>
    <property type="status" value="ALT_FRAME"/>
    <property type="molecule type" value="Genomic_DNA"/>
</dbReference>
<dbReference type="EMBL" id="Z47071">
    <property type="protein sequence ID" value="CAA87366.1"/>
    <property type="molecule type" value="Genomic_DNA"/>
</dbReference>
<dbReference type="EMBL" id="AY558119">
    <property type="protein sequence ID" value="AAS56445.1"/>
    <property type="molecule type" value="Genomic_DNA"/>
</dbReference>
<dbReference type="PIR" id="S50408">
    <property type="entry name" value="S50408"/>
</dbReference>
<dbReference type="DIP" id="DIP-4406N"/>
<dbReference type="STRING" id="4932.YMR151W"/>
<dbReference type="PaxDb" id="4932-YMR151W"/>
<dbReference type="EnsemblFungi" id="YMR151W_mRNA">
    <property type="protein sequence ID" value="YMR151W"/>
    <property type="gene ID" value="YMR151W"/>
</dbReference>
<dbReference type="AGR" id="SGD:S000004759"/>
<dbReference type="SGD" id="S000004759">
    <property type="gene designation" value="YIM2"/>
</dbReference>
<dbReference type="HOGENOM" id="CLU_1788336_0_0_1"/>
<dbReference type="GO" id="GO:0016020">
    <property type="term" value="C:membrane"/>
    <property type="evidence" value="ECO:0007669"/>
    <property type="project" value="UniProtKB-SubCell"/>
</dbReference>